<accession>B7J5I9</accession>
<sequence>MEIAVQCQNPTTDNSDCVVVGIYEGGILSPAATLVDLASGGALRALLDTGDFTGDCGDTQLLYQVPGMAAARVLVLGLGSHGKVKDSQFRKAALAAARALQGARVGRASLHLLDTPVIRRSAPACAKILVQAVADAEYHFDRHKKPADAPQRPISELQLSISENDTAALAELQGAVAEAQATARAVAWTRDMANEPGNICTPTWLAEQAEAMAGRLGIKSTILGPDAMEALGMHLLLGVAHGSRQPPRLIILEYRGGAENQAPIVLVGKGITFDAGGISLKPADKMDEMKYDMCGGASALAAIQAAAELQLPLNIVTVVPASENLPDGQATKPGDIHRSMNGLSVEVVNTDAEGRLILADTLTYVERFEPDVVIDMATLTGACIIALGHQTAAVMGNHEGLVHDLIAAGKESMDRVWELPLFEEYQEQLKSPVADLSNVGGRPAGTITAACFLSRFTENYRWAHLDIAGVAWKSGEHKGATGRPVPLLVEYLLRRARQVA</sequence>
<comment type="function">
    <text evidence="1">Presumably involved in the processing and regular turnover of intracellular proteins. Catalyzes the removal of unsubstituted N-terminal amino acids from various peptides.</text>
</comment>
<comment type="catalytic activity">
    <reaction evidence="1">
        <text>Release of an N-terminal amino acid, Xaa-|-Yaa-, in which Xaa is preferably Leu, but may be other amino acids including Pro although not Arg or Lys, and Yaa may be Pro. Amino acid amides and methyl esters are also readily hydrolyzed, but rates on arylamides are exceedingly low.</text>
        <dbReference type="EC" id="3.4.11.1"/>
    </reaction>
</comment>
<comment type="catalytic activity">
    <reaction evidence="1">
        <text>Release of an N-terminal amino acid, preferentially leucine, but not glutamic or aspartic acids.</text>
        <dbReference type="EC" id="3.4.11.10"/>
    </reaction>
</comment>
<comment type="cofactor">
    <cofactor evidence="1">
        <name>Mn(2+)</name>
        <dbReference type="ChEBI" id="CHEBI:29035"/>
    </cofactor>
    <text evidence="1">Binds 2 manganese ions per subunit.</text>
</comment>
<comment type="subcellular location">
    <subcellularLocation>
        <location evidence="1">Cytoplasm</location>
    </subcellularLocation>
</comment>
<comment type="similarity">
    <text evidence="1">Belongs to the peptidase M17 family.</text>
</comment>
<keyword id="KW-0031">Aminopeptidase</keyword>
<keyword id="KW-0963">Cytoplasm</keyword>
<keyword id="KW-0378">Hydrolase</keyword>
<keyword id="KW-0464">Manganese</keyword>
<keyword id="KW-0479">Metal-binding</keyword>
<keyword id="KW-0645">Protease</keyword>
<keyword id="KW-1185">Reference proteome</keyword>
<evidence type="ECO:0000255" key="1">
    <source>
        <dbReference type="HAMAP-Rule" id="MF_00181"/>
    </source>
</evidence>
<dbReference type="EC" id="3.4.11.1" evidence="1"/>
<dbReference type="EC" id="3.4.11.10" evidence="1"/>
<dbReference type="EMBL" id="CP001219">
    <property type="protein sequence ID" value="ACK79866.1"/>
    <property type="molecule type" value="Genomic_DNA"/>
</dbReference>
<dbReference type="RefSeq" id="WP_009567190.1">
    <property type="nucleotide sequence ID" value="NC_011761.1"/>
</dbReference>
<dbReference type="SMR" id="B7J5I9"/>
<dbReference type="STRING" id="243159.AFE_2201"/>
<dbReference type="MEROPS" id="M17.003"/>
<dbReference type="PaxDb" id="243159-AFE_2201"/>
<dbReference type="GeneID" id="65281319"/>
<dbReference type="KEGG" id="afr:AFE_2201"/>
<dbReference type="eggNOG" id="COG0260">
    <property type="taxonomic scope" value="Bacteria"/>
</dbReference>
<dbReference type="HOGENOM" id="CLU_013734_2_2_6"/>
<dbReference type="Proteomes" id="UP000001362">
    <property type="component" value="Chromosome"/>
</dbReference>
<dbReference type="GO" id="GO:0005737">
    <property type="term" value="C:cytoplasm"/>
    <property type="evidence" value="ECO:0007669"/>
    <property type="project" value="UniProtKB-SubCell"/>
</dbReference>
<dbReference type="GO" id="GO:0030145">
    <property type="term" value="F:manganese ion binding"/>
    <property type="evidence" value="ECO:0007669"/>
    <property type="project" value="UniProtKB-UniRule"/>
</dbReference>
<dbReference type="GO" id="GO:0070006">
    <property type="term" value="F:metalloaminopeptidase activity"/>
    <property type="evidence" value="ECO:0007669"/>
    <property type="project" value="InterPro"/>
</dbReference>
<dbReference type="GO" id="GO:0006508">
    <property type="term" value="P:proteolysis"/>
    <property type="evidence" value="ECO:0007669"/>
    <property type="project" value="UniProtKB-KW"/>
</dbReference>
<dbReference type="CDD" id="cd00433">
    <property type="entry name" value="Peptidase_M17"/>
    <property type="match status" value="1"/>
</dbReference>
<dbReference type="Gene3D" id="3.40.220.10">
    <property type="entry name" value="Leucine Aminopeptidase, subunit E, domain 1"/>
    <property type="match status" value="1"/>
</dbReference>
<dbReference type="Gene3D" id="3.40.630.10">
    <property type="entry name" value="Zn peptidases"/>
    <property type="match status" value="1"/>
</dbReference>
<dbReference type="HAMAP" id="MF_00181">
    <property type="entry name" value="Cytosol_peptidase_M17"/>
    <property type="match status" value="1"/>
</dbReference>
<dbReference type="InterPro" id="IPR011356">
    <property type="entry name" value="Leucine_aapep/pepB"/>
</dbReference>
<dbReference type="InterPro" id="IPR043472">
    <property type="entry name" value="Macro_dom-like"/>
</dbReference>
<dbReference type="InterPro" id="IPR000819">
    <property type="entry name" value="Peptidase_M17_C"/>
</dbReference>
<dbReference type="InterPro" id="IPR023042">
    <property type="entry name" value="Peptidase_M17_leu_NH2_pept"/>
</dbReference>
<dbReference type="InterPro" id="IPR008283">
    <property type="entry name" value="Peptidase_M17_N"/>
</dbReference>
<dbReference type="NCBIfam" id="NF002073">
    <property type="entry name" value="PRK00913.1-2"/>
    <property type="match status" value="1"/>
</dbReference>
<dbReference type="NCBIfam" id="NF002074">
    <property type="entry name" value="PRK00913.1-4"/>
    <property type="match status" value="1"/>
</dbReference>
<dbReference type="PANTHER" id="PTHR11963:SF23">
    <property type="entry name" value="CYTOSOL AMINOPEPTIDASE"/>
    <property type="match status" value="1"/>
</dbReference>
<dbReference type="PANTHER" id="PTHR11963">
    <property type="entry name" value="LEUCINE AMINOPEPTIDASE-RELATED"/>
    <property type="match status" value="1"/>
</dbReference>
<dbReference type="Pfam" id="PF00883">
    <property type="entry name" value="Peptidase_M17"/>
    <property type="match status" value="1"/>
</dbReference>
<dbReference type="Pfam" id="PF02789">
    <property type="entry name" value="Peptidase_M17_N"/>
    <property type="match status" value="1"/>
</dbReference>
<dbReference type="PRINTS" id="PR00481">
    <property type="entry name" value="LAMNOPPTDASE"/>
</dbReference>
<dbReference type="SUPFAM" id="SSF52949">
    <property type="entry name" value="Macro domain-like"/>
    <property type="match status" value="1"/>
</dbReference>
<dbReference type="SUPFAM" id="SSF53187">
    <property type="entry name" value="Zn-dependent exopeptidases"/>
    <property type="match status" value="1"/>
</dbReference>
<dbReference type="PROSITE" id="PS00631">
    <property type="entry name" value="CYTOSOL_AP"/>
    <property type="match status" value="1"/>
</dbReference>
<proteinExistence type="inferred from homology"/>
<reference key="1">
    <citation type="journal article" date="2008" name="BMC Genomics">
        <title>Acidithiobacillus ferrooxidans metabolism: from genome sequence to industrial applications.</title>
        <authorList>
            <person name="Valdes J."/>
            <person name="Pedroso I."/>
            <person name="Quatrini R."/>
            <person name="Dodson R.J."/>
            <person name="Tettelin H."/>
            <person name="Blake R. II"/>
            <person name="Eisen J.A."/>
            <person name="Holmes D.S."/>
        </authorList>
    </citation>
    <scope>NUCLEOTIDE SEQUENCE [LARGE SCALE GENOMIC DNA]</scope>
    <source>
        <strain>ATCC 23270 / DSM 14882 / CIP 104768 / NCIMB 8455</strain>
    </source>
</reference>
<organism>
    <name type="scientific">Acidithiobacillus ferrooxidans (strain ATCC 23270 / DSM 14882 / CIP 104768 / NCIMB 8455)</name>
    <name type="common">Ferrobacillus ferrooxidans (strain ATCC 23270)</name>
    <dbReference type="NCBI Taxonomy" id="243159"/>
    <lineage>
        <taxon>Bacteria</taxon>
        <taxon>Pseudomonadati</taxon>
        <taxon>Pseudomonadota</taxon>
        <taxon>Acidithiobacillia</taxon>
        <taxon>Acidithiobacillales</taxon>
        <taxon>Acidithiobacillaceae</taxon>
        <taxon>Acidithiobacillus</taxon>
    </lineage>
</organism>
<gene>
    <name evidence="1" type="primary">pepA</name>
    <name type="ordered locus">AFE_2201</name>
</gene>
<name>AMPA_ACIF2</name>
<feature type="chain" id="PRO_1000118444" description="Probable cytosol aminopeptidase">
    <location>
        <begin position="1"/>
        <end position="500"/>
    </location>
</feature>
<feature type="active site" evidence="1">
    <location>
        <position position="281"/>
    </location>
</feature>
<feature type="active site" evidence="1">
    <location>
        <position position="355"/>
    </location>
</feature>
<feature type="binding site" evidence="1">
    <location>
        <position position="269"/>
    </location>
    <ligand>
        <name>Mn(2+)</name>
        <dbReference type="ChEBI" id="CHEBI:29035"/>
        <label>2</label>
    </ligand>
</feature>
<feature type="binding site" evidence="1">
    <location>
        <position position="274"/>
    </location>
    <ligand>
        <name>Mn(2+)</name>
        <dbReference type="ChEBI" id="CHEBI:29035"/>
        <label>1</label>
    </ligand>
</feature>
<feature type="binding site" evidence="1">
    <location>
        <position position="274"/>
    </location>
    <ligand>
        <name>Mn(2+)</name>
        <dbReference type="ChEBI" id="CHEBI:29035"/>
        <label>2</label>
    </ligand>
</feature>
<feature type="binding site" evidence="1">
    <location>
        <position position="292"/>
    </location>
    <ligand>
        <name>Mn(2+)</name>
        <dbReference type="ChEBI" id="CHEBI:29035"/>
        <label>2</label>
    </ligand>
</feature>
<feature type="binding site" evidence="1">
    <location>
        <position position="351"/>
    </location>
    <ligand>
        <name>Mn(2+)</name>
        <dbReference type="ChEBI" id="CHEBI:29035"/>
        <label>1</label>
    </ligand>
</feature>
<feature type="binding site" evidence="1">
    <location>
        <position position="353"/>
    </location>
    <ligand>
        <name>Mn(2+)</name>
        <dbReference type="ChEBI" id="CHEBI:29035"/>
        <label>1</label>
    </ligand>
</feature>
<feature type="binding site" evidence="1">
    <location>
        <position position="353"/>
    </location>
    <ligand>
        <name>Mn(2+)</name>
        <dbReference type="ChEBI" id="CHEBI:29035"/>
        <label>2</label>
    </ligand>
</feature>
<protein>
    <recommendedName>
        <fullName evidence="1">Probable cytosol aminopeptidase</fullName>
        <ecNumber evidence="1">3.4.11.1</ecNumber>
    </recommendedName>
    <alternativeName>
        <fullName evidence="1">Leucine aminopeptidase</fullName>
        <shortName evidence="1">LAP</shortName>
        <ecNumber evidence="1">3.4.11.10</ecNumber>
    </alternativeName>
    <alternativeName>
        <fullName evidence="1">Leucyl aminopeptidase</fullName>
    </alternativeName>
</protein>